<dbReference type="EC" id="1.14.19.71" evidence="6"/>
<dbReference type="EMBL" id="AAHF01000014">
    <property type="protein sequence ID" value="EAL85144.1"/>
    <property type="molecule type" value="Genomic_DNA"/>
</dbReference>
<dbReference type="RefSeq" id="XP_747182.1">
    <property type="nucleotide sequence ID" value="XM_742089.1"/>
</dbReference>
<dbReference type="SMR" id="Q4WAW8"/>
<dbReference type="STRING" id="330879.Q4WAW8"/>
<dbReference type="EnsemblFungi" id="EAL85144">
    <property type="protein sequence ID" value="EAL85144"/>
    <property type="gene ID" value="AFUA_8G00220"/>
</dbReference>
<dbReference type="GeneID" id="3504529"/>
<dbReference type="KEGG" id="afm:AFUA_8G00220"/>
<dbReference type="VEuPathDB" id="FungiDB:Afu8g00220"/>
<dbReference type="eggNOG" id="KOG0156">
    <property type="taxonomic scope" value="Eukaryota"/>
</dbReference>
<dbReference type="HOGENOM" id="CLU_001570_2_3_1"/>
<dbReference type="InParanoid" id="Q4WAW8"/>
<dbReference type="OMA" id="HVWFGSN"/>
<dbReference type="OrthoDB" id="1470350at2759"/>
<dbReference type="Proteomes" id="UP000002530">
    <property type="component" value="Chromosome 8"/>
</dbReference>
<dbReference type="GO" id="GO:0016020">
    <property type="term" value="C:membrane"/>
    <property type="evidence" value="ECO:0007669"/>
    <property type="project" value="UniProtKB-SubCell"/>
</dbReference>
<dbReference type="GO" id="GO:0020037">
    <property type="term" value="F:heme binding"/>
    <property type="evidence" value="ECO:0007669"/>
    <property type="project" value="InterPro"/>
</dbReference>
<dbReference type="GO" id="GO:0005506">
    <property type="term" value="F:iron ion binding"/>
    <property type="evidence" value="ECO:0007669"/>
    <property type="project" value="InterPro"/>
</dbReference>
<dbReference type="GO" id="GO:0004497">
    <property type="term" value="F:monooxygenase activity"/>
    <property type="evidence" value="ECO:0007669"/>
    <property type="project" value="UniProtKB-KW"/>
</dbReference>
<dbReference type="GO" id="GO:0016705">
    <property type="term" value="F:oxidoreductase activity, acting on paired donors, with incorporation or reduction of molecular oxygen"/>
    <property type="evidence" value="ECO:0007669"/>
    <property type="project" value="InterPro"/>
</dbReference>
<dbReference type="GO" id="GO:1902181">
    <property type="term" value="P:verruculogen biosynthetic process"/>
    <property type="evidence" value="ECO:0000314"/>
    <property type="project" value="GO_Central"/>
</dbReference>
<dbReference type="CDD" id="cd11065">
    <property type="entry name" value="CYP64-like"/>
    <property type="match status" value="1"/>
</dbReference>
<dbReference type="FunFam" id="1.10.630.10:FF:000160">
    <property type="entry name" value="Fumitremorgin C synthase"/>
    <property type="match status" value="1"/>
</dbReference>
<dbReference type="Gene3D" id="1.10.630.10">
    <property type="entry name" value="Cytochrome P450"/>
    <property type="match status" value="1"/>
</dbReference>
<dbReference type="InterPro" id="IPR001128">
    <property type="entry name" value="Cyt_P450"/>
</dbReference>
<dbReference type="InterPro" id="IPR002401">
    <property type="entry name" value="Cyt_P450_E_grp-I"/>
</dbReference>
<dbReference type="InterPro" id="IPR036396">
    <property type="entry name" value="Cyt_P450_sf"/>
</dbReference>
<dbReference type="InterPro" id="IPR050364">
    <property type="entry name" value="Cytochrome_P450_fung"/>
</dbReference>
<dbReference type="PANTHER" id="PTHR46300:SF1">
    <property type="entry name" value="P450, PUTATIVE (EUROFUNG)-RELATED"/>
    <property type="match status" value="1"/>
</dbReference>
<dbReference type="PANTHER" id="PTHR46300">
    <property type="entry name" value="P450, PUTATIVE (EUROFUNG)-RELATED-RELATED"/>
    <property type="match status" value="1"/>
</dbReference>
<dbReference type="Pfam" id="PF00067">
    <property type="entry name" value="p450"/>
    <property type="match status" value="1"/>
</dbReference>
<dbReference type="PRINTS" id="PR00463">
    <property type="entry name" value="EP450I"/>
</dbReference>
<dbReference type="PRINTS" id="PR00385">
    <property type="entry name" value="P450"/>
</dbReference>
<dbReference type="SUPFAM" id="SSF48264">
    <property type="entry name" value="Cytochrome P450"/>
    <property type="match status" value="1"/>
</dbReference>
<comment type="function">
    <text evidence="3 4 5 6 7 8 9 10 13 14">Cytochrome P450 monooxygenase; part of the gene cluster that mediates the biosynthesis of fumitremorgins, indole alkaloids that carry not only intriguing chemical structures, but also interesting biological and pharmacological activities (PubMed:19226505, PubMed:23649274). The biosynthesis of fumitremorgin-type alkaloids begins by condensation of the two amino acids L-tryptophan and L-proline to brevianamide F, catalyzed by the non-ribosomal peptide synthetase ftmA (PubMed:16755625). Brevianamide F is then prenylated by the prenyltransferase ftmPT1/ftmB in the presence of dimethylallyl diphosphate, resulting in the formation of tryprostatin B (PubMed:16000710, PubMed:21105662, PubMed:23090579). The three cytochrome P450 monooxygenases, ftmP450-1/ftmC, ftmP450-2/ftmE and ftmP450-3/FtmG, are responsible for the conversion of tryprostatin B to 6-hydroxytryprostatin B, tryprostatin A to fumitremorgin C and fumitremorgin C to 12,13-dihydroxyfumitremorgin C, respectively (PubMed:19226505). The putative methyltransferase ftmMT/ftmD is expected for the conversion of 6-hydroxytryprostatin B to tryprostatin A (Probable). FtmPT2/FtmH catalyzes the prenylation of 12,13-dihydroxyfumitre-morgin C in the presence of dimethylallyl diphosphate, resulting in the formation of fumitremorgin B (PubMed:18683158). Fumitremorgin B is further converted to verruculogen by ftmOx1/ftmF via the insertion of an endoperoxide bond between the two prenyl moieties (PubMed:19763315). In some fungal species, verruculogen is further converted to fumitremorgin A, but the enzymes involved in this step have not been identified yet (Probable).</text>
</comment>
<comment type="catalytic activity">
    <reaction evidence="6">
        <text>tryprostatin A + reduced [NADPH--hemoprotein reductase] + O2 = fumitremorgin C + oxidized [NADPH--hemoprotein reductase] + 2 H2O + H(+)</text>
        <dbReference type="Rhea" id="RHEA:35963"/>
        <dbReference type="Rhea" id="RHEA-COMP:11964"/>
        <dbReference type="Rhea" id="RHEA-COMP:11965"/>
        <dbReference type="ChEBI" id="CHEBI:15377"/>
        <dbReference type="ChEBI" id="CHEBI:15378"/>
        <dbReference type="ChEBI" id="CHEBI:15379"/>
        <dbReference type="ChEBI" id="CHEBI:57618"/>
        <dbReference type="ChEBI" id="CHEBI:58210"/>
        <dbReference type="ChEBI" id="CHEBI:72761"/>
        <dbReference type="ChEBI" id="CHEBI:72763"/>
        <dbReference type="EC" id="1.14.19.71"/>
    </reaction>
</comment>
<comment type="cofactor">
    <cofactor evidence="1">
        <name>heme</name>
        <dbReference type="ChEBI" id="CHEBI:30413"/>
    </cofactor>
</comment>
<comment type="pathway">
    <text evidence="6 10">Mycotoxin biosynthesis.</text>
</comment>
<comment type="subcellular location">
    <subcellularLocation>
        <location evidence="2">Membrane</location>
        <topology evidence="2">Single-pass membrane protein</topology>
    </subcellularLocation>
</comment>
<comment type="similarity">
    <text evidence="13">Belongs to the cytochrome P450 family.</text>
</comment>
<comment type="caution">
    <text evidence="15">In contrast to other A.fumigatus strains, strain ATCC MYA-4609 does not produce indole alkaloids such as fumitremorgins and verruculogen. While the biosynthetic pathway is complete, a variation in the O-methyltransferase FtmD (AC Q4WAW6) abolishes production of the tryprostatin A intermediate (PubMed:23649274).</text>
</comment>
<organism>
    <name type="scientific">Aspergillus fumigatus (strain ATCC MYA-4609 / CBS 101355 / FGSC A1100 / Af293)</name>
    <name type="common">Neosartorya fumigata</name>
    <dbReference type="NCBI Taxonomy" id="330879"/>
    <lineage>
        <taxon>Eukaryota</taxon>
        <taxon>Fungi</taxon>
        <taxon>Dikarya</taxon>
        <taxon>Ascomycota</taxon>
        <taxon>Pezizomycotina</taxon>
        <taxon>Eurotiomycetes</taxon>
        <taxon>Eurotiomycetidae</taxon>
        <taxon>Eurotiales</taxon>
        <taxon>Aspergillaceae</taxon>
        <taxon>Aspergillus</taxon>
        <taxon>Aspergillus subgen. Fumigati</taxon>
    </lineage>
</organism>
<gene>
    <name evidence="11" type="primary">ftmP450-2</name>
    <name evidence="12" type="synonym">ftmE</name>
    <name type="ORF">AFUA_8G00220</name>
</gene>
<evidence type="ECO:0000250" key="1">
    <source>
        <dbReference type="UniProtKB" id="P04798"/>
    </source>
</evidence>
<evidence type="ECO:0000255" key="2"/>
<evidence type="ECO:0000269" key="3">
    <source>
    </source>
</evidence>
<evidence type="ECO:0000269" key="4">
    <source>
    </source>
</evidence>
<evidence type="ECO:0000269" key="5">
    <source>
    </source>
</evidence>
<evidence type="ECO:0000269" key="6">
    <source>
    </source>
</evidence>
<evidence type="ECO:0000269" key="7">
    <source>
    </source>
</evidence>
<evidence type="ECO:0000269" key="8">
    <source>
    </source>
</evidence>
<evidence type="ECO:0000269" key="9">
    <source>
    </source>
</evidence>
<evidence type="ECO:0000269" key="10">
    <source>
    </source>
</evidence>
<evidence type="ECO:0000303" key="11">
    <source>
    </source>
</evidence>
<evidence type="ECO:0000303" key="12">
    <source>
    </source>
</evidence>
<evidence type="ECO:0000305" key="13"/>
<evidence type="ECO:0000305" key="14">
    <source>
    </source>
</evidence>
<evidence type="ECO:0000305" key="15">
    <source>
    </source>
</evidence>
<feature type="chain" id="PRO_0000424121" description="Fumitremorgin C synthase">
    <location>
        <begin position="1"/>
        <end position="526"/>
    </location>
</feature>
<feature type="transmembrane region" description="Helical" evidence="2">
    <location>
        <begin position="4"/>
        <end position="24"/>
    </location>
</feature>
<feature type="binding site" description="axial binding residue" evidence="1">
    <location>
        <position position="443"/>
    </location>
    <ligand>
        <name>heme</name>
        <dbReference type="ChEBI" id="CHEBI:30413"/>
    </ligand>
    <ligandPart>
        <name>Fe</name>
        <dbReference type="ChEBI" id="CHEBI:18248"/>
    </ligandPart>
</feature>
<proteinExistence type="evidence at protein level"/>
<keyword id="KW-0349">Heme</keyword>
<keyword id="KW-0408">Iron</keyword>
<keyword id="KW-0472">Membrane</keyword>
<keyword id="KW-0479">Metal-binding</keyword>
<keyword id="KW-0503">Monooxygenase</keyword>
<keyword id="KW-0560">Oxidoreductase</keyword>
<keyword id="KW-1185">Reference proteome</keyword>
<keyword id="KW-0812">Transmembrane</keyword>
<keyword id="KW-1133">Transmembrane helix</keyword>
<keyword id="KW-0843">Virulence</keyword>
<accession>Q4WAW8</accession>
<protein>
    <recommendedName>
        <fullName evidence="11">Fumitremorgin C synthase</fullName>
        <ecNumber evidence="6">1.14.19.71</ecNumber>
    </recommendedName>
    <alternativeName>
        <fullName evidence="11">Cytochrome P450 monooxygenase ftmP450-2</fullName>
    </alternativeName>
    <alternativeName>
        <fullName evidence="12">Fumitremorgin biosynthesis protein E</fullName>
    </alternativeName>
</protein>
<sequence>MERLPLSPAVLFLIIVLPILYLWIRYTAPARPHGKHLSLPPGPPRLPKIGNLHQVPRQIPWKKYKEWSDTYGPIMSVQLADTIAVVFSSWDLIKNHIERRNTIYSSRPSVPFFLHATGGLNASILPYGPEWKLQRAIRSSVLKPSMTVKYRDVQHVETTQLLHELLSTNDFPVCLRRCIASVFLTVAYGERCVDHAGLEAIDRLEELNRAIALHAEALFSGAAGILTQLVLPKALVDRLPVRWKKDADMLHNRLTADLVARTRAALVRPGWNWVKEFSMKDGIGSGDGDGEQGSKVELKRLAYMVGSLYEASMAASQALRVIILAGLLHPDATRRMHDELDAVVGTGRLPDFHDAAQLPYTQAFIKEAMRWRSLTPMGSPRATSDEDECRGYHIPCGATVLVNVWAINHDEAIFLDPFAFQPERWIENPDLPQLMYGMGQRACPGRHMGQDSLFLATARLFWAFDMALPDGADPIDQERFLDSGTTLAAFLPDFEVRFTPRSEKYQEVIENSMAVLPDVLSISATP</sequence>
<reference key="1">
    <citation type="journal article" date="2005" name="Nature">
        <title>Genomic sequence of the pathogenic and allergenic filamentous fungus Aspergillus fumigatus.</title>
        <authorList>
            <person name="Nierman W.C."/>
            <person name="Pain A."/>
            <person name="Anderson M.J."/>
            <person name="Wortman J.R."/>
            <person name="Kim H.S."/>
            <person name="Arroyo J."/>
            <person name="Berriman M."/>
            <person name="Abe K."/>
            <person name="Archer D.B."/>
            <person name="Bermejo C."/>
            <person name="Bennett J.W."/>
            <person name="Bowyer P."/>
            <person name="Chen D."/>
            <person name="Collins M."/>
            <person name="Coulsen R."/>
            <person name="Davies R."/>
            <person name="Dyer P.S."/>
            <person name="Farman M.L."/>
            <person name="Fedorova N."/>
            <person name="Fedorova N.D."/>
            <person name="Feldblyum T.V."/>
            <person name="Fischer R."/>
            <person name="Fosker N."/>
            <person name="Fraser A."/>
            <person name="Garcia J.L."/>
            <person name="Garcia M.J."/>
            <person name="Goble A."/>
            <person name="Goldman G.H."/>
            <person name="Gomi K."/>
            <person name="Griffith-Jones S."/>
            <person name="Gwilliam R."/>
            <person name="Haas B.J."/>
            <person name="Haas H."/>
            <person name="Harris D.E."/>
            <person name="Horiuchi H."/>
            <person name="Huang J."/>
            <person name="Humphray S."/>
            <person name="Jimenez J."/>
            <person name="Keller N."/>
            <person name="Khouri H."/>
            <person name="Kitamoto K."/>
            <person name="Kobayashi T."/>
            <person name="Konzack S."/>
            <person name="Kulkarni R."/>
            <person name="Kumagai T."/>
            <person name="Lafton A."/>
            <person name="Latge J.-P."/>
            <person name="Li W."/>
            <person name="Lord A."/>
            <person name="Lu C."/>
            <person name="Majoros W.H."/>
            <person name="May G.S."/>
            <person name="Miller B.L."/>
            <person name="Mohamoud Y."/>
            <person name="Molina M."/>
            <person name="Monod M."/>
            <person name="Mouyna I."/>
            <person name="Mulligan S."/>
            <person name="Murphy L.D."/>
            <person name="O'Neil S."/>
            <person name="Paulsen I."/>
            <person name="Penalva M.A."/>
            <person name="Pertea M."/>
            <person name="Price C."/>
            <person name="Pritchard B.L."/>
            <person name="Quail M.A."/>
            <person name="Rabbinowitsch E."/>
            <person name="Rawlins N."/>
            <person name="Rajandream M.A."/>
            <person name="Reichard U."/>
            <person name="Renauld H."/>
            <person name="Robson G.D."/>
            <person name="Rodriguez de Cordoba S."/>
            <person name="Rodriguez-Pena J.M."/>
            <person name="Ronning C.M."/>
            <person name="Rutter S."/>
            <person name="Salzberg S.L."/>
            <person name="Sanchez M."/>
            <person name="Sanchez-Ferrero J.C."/>
            <person name="Saunders D."/>
            <person name="Seeger K."/>
            <person name="Squares R."/>
            <person name="Squares S."/>
            <person name="Takeuchi M."/>
            <person name="Tekaia F."/>
            <person name="Turner G."/>
            <person name="Vazquez de Aldana C.R."/>
            <person name="Weidman J."/>
            <person name="White O."/>
            <person name="Woodward J.R."/>
            <person name="Yu J.-H."/>
            <person name="Fraser C.M."/>
            <person name="Galagan J.E."/>
            <person name="Asai K."/>
            <person name="Machida M."/>
            <person name="Hall N."/>
            <person name="Barrell B.G."/>
            <person name="Denning D.W."/>
        </authorList>
    </citation>
    <scope>NUCLEOTIDE SEQUENCE [LARGE SCALE GENOMIC DNA]</scope>
    <source>
        <strain>ATCC MYA-4609 / CBS 101355 / FGSC A1100 / Af293</strain>
    </source>
</reference>
<reference key="2">
    <citation type="journal article" date="2005" name="Microbiology">
        <title>Overproduction, purification and characterization of FtmPT1, a brevianamide F prenyltransferase from Aspergillus fumigatus.</title>
        <authorList>
            <person name="Grundmann A."/>
            <person name="Li S.M."/>
        </authorList>
    </citation>
    <scope>FUNCTION</scope>
</reference>
<reference key="3">
    <citation type="journal article" date="2006" name="ChemBioChem">
        <title>The fumitremorgin gene cluster of Aspergillus fumigatus: identification of a gene encoding brevianamide F synthetase.</title>
        <authorList>
            <person name="Maiya S."/>
            <person name="Grundmann A."/>
            <person name="Li S.M."/>
            <person name="Turner G."/>
        </authorList>
    </citation>
    <scope>FUNCTION</scope>
</reference>
<reference key="4">
    <citation type="journal article" date="2008" name="ChemBioChem">
        <title>FtmPT2, an N-prenyltransferase from Aspergillus fumigatus, catalyses the last step in the biosynthesis of fumitremorgin B.</title>
        <authorList>
            <person name="Grundmann A."/>
            <person name="Kuznetsova T."/>
            <person name="Afiyatullov S.S."/>
            <person name="Li S.M."/>
        </authorList>
    </citation>
    <scope>FUNCTION</scope>
</reference>
<reference key="5">
    <citation type="journal article" date="2009" name="ChemBioChem">
        <title>Identification of cytochrome P450s required for fumitremorgin biosynthesis in Aspergillus fumigatus.</title>
        <authorList>
            <person name="Kato N."/>
            <person name="Suzuki H."/>
            <person name="Takagi H."/>
            <person name="Asami Y."/>
            <person name="Kakeya H."/>
            <person name="Uramoto M."/>
            <person name="Usui T."/>
            <person name="Takahashi S."/>
            <person name="Sugimoto Y."/>
            <person name="Osada H."/>
        </authorList>
    </citation>
    <scope>FUNCTION</scope>
    <scope>CATALYTIC ACTIVITY</scope>
    <scope>PATHWAY</scope>
</reference>
<reference key="6">
    <citation type="journal article" date="2009" name="Org. Biomol. Chem.">
        <title>FtmOx1, a non-heme Fe(II) and alpha-ketoglutarate-dependent dioxygenase, catalyses the endoperoxide formation of verruculogen in Aspergillus fumigatus.</title>
        <authorList>
            <person name="Steffan N."/>
            <person name="Grundmann A."/>
            <person name="Afiyatullov S."/>
            <person name="Ruan H."/>
            <person name="Li S.M."/>
        </authorList>
    </citation>
    <scope>FUNCTION</scope>
</reference>
<reference key="7">
    <citation type="journal article" date="2010" name="J. Am. Chem. Soc.">
        <title>Structure-function analysis of an enzymatic prenyl transfer reaction identifies a reaction chamber with modifiable specificity.</title>
        <authorList>
            <person name="Jost M."/>
            <person name="Zocher G."/>
            <person name="Tarcz S."/>
            <person name="Matuschek M."/>
            <person name="Xie X."/>
            <person name="Li S.M."/>
            <person name="Stehle T."/>
        </authorList>
    </citation>
    <scope>FUNCTION</scope>
</reference>
<reference key="8">
    <citation type="journal article" date="2012" name="Org. Biomol. Chem.">
        <title>Breaking the regioselectivity of indole prenyltransferases: identification of regular C3-prenylated hexahydropyrrolo[2,3-b]indoles as side products of the regular C2-prenyltransferase FtmPT1.</title>
        <authorList>
            <person name="Wollinsky B."/>
            <person name="Ludwig L."/>
            <person name="Xie X."/>
            <person name="Li S.M."/>
        </authorList>
    </citation>
    <scope>FUNCTION</scope>
</reference>
<reference key="9">
    <citation type="journal article" date="2013" name="Biosci. Biotechnol. Biochem.">
        <title>A point mutation in ftmD blocks the fumitremorgin biosynthetic pathway in Aspergillus fumigatus strain Af293.</title>
        <authorList>
            <person name="Kato N."/>
            <person name="Suzuki H."/>
            <person name="Okumura H."/>
            <person name="Takahashi S."/>
            <person name="Osada H."/>
        </authorList>
    </citation>
    <scope>FUNCTION</scope>
    <scope>PATHWAY</scope>
    <source>
        <strain>ATCC MYA-4609 / CBS 101355 / FGSC A1100 / Af293</strain>
    </source>
</reference>
<name>FTME_ASPFU</name>